<sequence>MRVAALISGGKDSCYNMMQCIAAGHQIVALANLRPAENQVGSDELDSYMYQTVGHHAIDLYAEAMALPLYRRTIRGRSLDTRQVYTKCEGDEVEDLYELLKLVKEKEEVEGISVGAILSDYQRIRVENVCKRLNLQPLAYLWQRNQEDLLREMISSNIQAMIIKVAALGLDPDKHLGKTLDQMEPYLIELSKKYGVHVCGEGGEYETFTLDCPLFKKKIIVDSSEVVIHSADAFAPVAYLRFLELHLEDKVSSVPDNYRTSNYIYNF</sequence>
<accession>Q7L8W6</accession>
<accession>B3KWG1</accession>
<accession>Q96HJ6</accession>
<protein>
    <recommendedName>
        <fullName evidence="5">Diphthine--ammonia ligase</fullName>
        <ecNumber evidence="6">6.3.1.14</ecNumber>
    </recommendedName>
    <alternativeName>
        <fullName>ATP-binding domain-containing protein 4</fullName>
    </alternativeName>
    <alternativeName>
        <fullName>Diphthamide synthase</fullName>
    </alternativeName>
    <alternativeName>
        <fullName>Diphthamide synthetase</fullName>
    </alternativeName>
    <alternativeName>
        <fullName>Protein DPH6 homolog</fullName>
    </alternativeName>
</protein>
<keyword id="KW-0025">Alternative splicing</keyword>
<keyword id="KW-0067">ATP-binding</keyword>
<keyword id="KW-0436">Ligase</keyword>
<keyword id="KW-0547">Nucleotide-binding</keyword>
<keyword id="KW-0597">Phosphoprotein</keyword>
<keyword id="KW-1267">Proteomics identification</keyword>
<keyword id="KW-1185">Reference proteome</keyword>
<name>DPH6_HUMAN</name>
<feature type="chain" id="PRO_0000282397" description="Diphthine--ammonia ligase">
    <location>
        <begin position="1"/>
        <end position="267"/>
    </location>
</feature>
<feature type="modified residue" description="Phosphotyrosine" evidence="2">
    <location>
        <position position="97"/>
    </location>
</feature>
<feature type="splice variant" id="VSP_042933" description="In isoform 2." evidence="4">
    <original>EKEEVEGISVGAILSDYQRIRVENVCKRLNLQPLAYLWQRNQEDLLREMISSNIQAMIIKVAALGLDPDKHLGKTLDQMEPYLIELSKKYGVHVCGEGGEYETFTLDCPLFKKKIIVDSSEVVIHSADAFAPVAYLRFLELHLEDKVSSVPDNYRTSNYIYNF</original>
    <variation>GITRMTLLAEYDALNLQDFHMHLKVGSQAIVYRTPNELCTHSKFDKHTFPPFISEIAKCEV</variation>
    <location>
        <begin position="105"/>
        <end position="267"/>
    </location>
</feature>
<feature type="sequence variant" id="VAR_031403" description="In dbSNP:rs34907758.">
    <original>G</original>
    <variation>E</variation>
    <location>
        <position position="41"/>
    </location>
</feature>
<feature type="sequence variant" id="VAR_031404" description="In dbSNP:rs10519996.">
    <original>P</original>
    <variation>R</variation>
    <location>
        <position position="236"/>
    </location>
</feature>
<organism>
    <name type="scientific">Homo sapiens</name>
    <name type="common">Human</name>
    <dbReference type="NCBI Taxonomy" id="9606"/>
    <lineage>
        <taxon>Eukaryota</taxon>
        <taxon>Metazoa</taxon>
        <taxon>Chordata</taxon>
        <taxon>Craniata</taxon>
        <taxon>Vertebrata</taxon>
        <taxon>Euteleostomi</taxon>
        <taxon>Mammalia</taxon>
        <taxon>Eutheria</taxon>
        <taxon>Euarchontoglires</taxon>
        <taxon>Primates</taxon>
        <taxon>Haplorrhini</taxon>
        <taxon>Catarrhini</taxon>
        <taxon>Hominidae</taxon>
        <taxon>Homo</taxon>
    </lineage>
</organism>
<evidence type="ECO:0000250" key="1">
    <source>
        <dbReference type="UniProtKB" id="Q12429"/>
    </source>
</evidence>
<evidence type="ECO:0000250" key="2">
    <source>
        <dbReference type="UniProtKB" id="Q9CQ28"/>
    </source>
</evidence>
<evidence type="ECO:0000269" key="3">
    <source>
    </source>
</evidence>
<evidence type="ECO:0000303" key="4">
    <source>
    </source>
</evidence>
<evidence type="ECO:0000305" key="5"/>
<evidence type="ECO:0000305" key="6">
    <source>
    </source>
</evidence>
<evidence type="ECO:0000312" key="7">
    <source>
        <dbReference type="HGNC" id="HGNC:30543"/>
    </source>
</evidence>
<dbReference type="EC" id="6.3.1.14" evidence="6"/>
<dbReference type="EMBL" id="AK094007">
    <property type="protein sequence ID" value="BAC04266.1"/>
    <property type="molecule type" value="mRNA"/>
</dbReference>
<dbReference type="EMBL" id="AK125017">
    <property type="protein sequence ID" value="BAG54123.1"/>
    <property type="molecule type" value="mRNA"/>
</dbReference>
<dbReference type="EMBL" id="AC015994">
    <property type="status" value="NOT_ANNOTATED_CDS"/>
    <property type="molecule type" value="Genomic_DNA"/>
</dbReference>
<dbReference type="EMBL" id="AC019288">
    <property type="status" value="NOT_ANNOTATED_CDS"/>
    <property type="molecule type" value="Genomic_DNA"/>
</dbReference>
<dbReference type="EMBL" id="BC008485">
    <property type="protein sequence ID" value="AAH08485.2"/>
    <property type="molecule type" value="mRNA"/>
</dbReference>
<dbReference type="EMBL" id="BC066652">
    <property type="protein sequence ID" value="AAH66652.1"/>
    <property type="molecule type" value="mRNA"/>
</dbReference>
<dbReference type="CCDS" id="CCDS10043.1">
    <molecule id="Q7L8W6-1"/>
</dbReference>
<dbReference type="CCDS" id="CCDS45213.1">
    <molecule id="Q7L8W6-2"/>
</dbReference>
<dbReference type="RefSeq" id="NP_001135444.1">
    <molecule id="Q7L8W6-2"/>
    <property type="nucleotide sequence ID" value="NM_001141972.2"/>
</dbReference>
<dbReference type="RefSeq" id="NP_542381.1">
    <molecule id="Q7L8W6-1"/>
    <property type="nucleotide sequence ID" value="NM_080650.4"/>
</dbReference>
<dbReference type="SMR" id="Q7L8W6"/>
<dbReference type="BioGRID" id="124651">
    <property type="interactions" value="30"/>
</dbReference>
<dbReference type="FunCoup" id="Q7L8W6">
    <property type="interactions" value="892"/>
</dbReference>
<dbReference type="IntAct" id="Q7L8W6">
    <property type="interactions" value="19"/>
</dbReference>
<dbReference type="STRING" id="9606.ENSP00000256538"/>
<dbReference type="GlyGen" id="Q7L8W6">
    <property type="glycosylation" value="1 site, 1 O-linked glycan (1 site)"/>
</dbReference>
<dbReference type="iPTMnet" id="Q7L8W6"/>
<dbReference type="PhosphoSitePlus" id="Q7L8W6"/>
<dbReference type="BioMuta" id="DPH6"/>
<dbReference type="DMDM" id="317373478"/>
<dbReference type="jPOST" id="Q7L8W6"/>
<dbReference type="MassIVE" id="Q7L8W6"/>
<dbReference type="PaxDb" id="9606-ENSP00000256538"/>
<dbReference type="PeptideAtlas" id="Q7L8W6"/>
<dbReference type="ProteomicsDB" id="68840">
    <molecule id="Q7L8W6-1"/>
</dbReference>
<dbReference type="ProteomicsDB" id="68841">
    <molecule id="Q7L8W6-2"/>
</dbReference>
<dbReference type="Pumba" id="Q7L8W6"/>
<dbReference type="Antibodypedia" id="51931">
    <property type="antibodies" value="53 antibodies from 15 providers"/>
</dbReference>
<dbReference type="DNASU" id="89978"/>
<dbReference type="Ensembl" id="ENST00000256538.9">
    <molecule id="Q7L8W6-1"/>
    <property type="protein sequence ID" value="ENSP00000256538.4"/>
    <property type="gene ID" value="ENSG00000134146.12"/>
</dbReference>
<dbReference type="Ensembl" id="ENST00000440392.3">
    <molecule id="Q7L8W6-2"/>
    <property type="protein sequence ID" value="ENSP00000406976.2"/>
    <property type="gene ID" value="ENSG00000134146.12"/>
</dbReference>
<dbReference type="GeneID" id="89978"/>
<dbReference type="KEGG" id="hsa:89978"/>
<dbReference type="MANE-Select" id="ENST00000256538.9">
    <property type="protein sequence ID" value="ENSP00000256538.4"/>
    <property type="RefSeq nucleotide sequence ID" value="NM_080650.4"/>
    <property type="RefSeq protein sequence ID" value="NP_542381.1"/>
</dbReference>
<dbReference type="UCSC" id="uc001zja.4">
    <molecule id="Q7L8W6-1"/>
    <property type="organism name" value="human"/>
</dbReference>
<dbReference type="AGR" id="HGNC:30543"/>
<dbReference type="CTD" id="89978"/>
<dbReference type="DisGeNET" id="89978"/>
<dbReference type="GeneCards" id="DPH6"/>
<dbReference type="HGNC" id="HGNC:30543">
    <property type="gene designation" value="DPH6"/>
</dbReference>
<dbReference type="HPA" id="ENSG00000134146">
    <property type="expression patterns" value="Low tissue specificity"/>
</dbReference>
<dbReference type="MIM" id="618391">
    <property type="type" value="gene"/>
</dbReference>
<dbReference type="neXtProt" id="NX_Q7L8W6"/>
<dbReference type="OpenTargets" id="ENSG00000134146"/>
<dbReference type="PharmGKB" id="PA142672572"/>
<dbReference type="VEuPathDB" id="HostDB:ENSG00000134146"/>
<dbReference type="eggNOG" id="KOG2316">
    <property type="taxonomic scope" value="Eukaryota"/>
</dbReference>
<dbReference type="GeneTree" id="ENSGT00420000029820"/>
<dbReference type="HOGENOM" id="CLU_010289_0_1_1"/>
<dbReference type="InParanoid" id="Q7L8W6"/>
<dbReference type="OMA" id="NYALYWA"/>
<dbReference type="OrthoDB" id="686384at2759"/>
<dbReference type="PAN-GO" id="Q7L8W6">
    <property type="GO annotations" value="2 GO annotations based on evolutionary models"/>
</dbReference>
<dbReference type="PhylomeDB" id="Q7L8W6"/>
<dbReference type="TreeFam" id="TF313566"/>
<dbReference type="PathwayCommons" id="Q7L8W6"/>
<dbReference type="Reactome" id="R-HSA-5358493">
    <property type="pathway name" value="Synthesis of diphthamide-EEF2"/>
</dbReference>
<dbReference type="SignaLink" id="Q7L8W6"/>
<dbReference type="UniPathway" id="UPA00559"/>
<dbReference type="BioGRID-ORCS" id="89978">
    <property type="hits" value="297 hits in 1125 CRISPR screens"/>
</dbReference>
<dbReference type="ChiTaRS" id="DPH6">
    <property type="organism name" value="human"/>
</dbReference>
<dbReference type="GenomeRNAi" id="89978"/>
<dbReference type="Pharos" id="Q7L8W6">
    <property type="development level" value="Tbio"/>
</dbReference>
<dbReference type="PRO" id="PR:Q7L8W6"/>
<dbReference type="Proteomes" id="UP000005640">
    <property type="component" value="Chromosome 15"/>
</dbReference>
<dbReference type="RNAct" id="Q7L8W6">
    <property type="molecule type" value="protein"/>
</dbReference>
<dbReference type="Bgee" id="ENSG00000134146">
    <property type="expression patterns" value="Expressed in calcaneal tendon and 140 other cell types or tissues"/>
</dbReference>
<dbReference type="ExpressionAtlas" id="Q7L8W6">
    <property type="expression patterns" value="baseline and differential"/>
</dbReference>
<dbReference type="GO" id="GO:0005829">
    <property type="term" value="C:cytosol"/>
    <property type="evidence" value="ECO:0000304"/>
    <property type="project" value="Reactome"/>
</dbReference>
<dbReference type="GO" id="GO:0005524">
    <property type="term" value="F:ATP binding"/>
    <property type="evidence" value="ECO:0007669"/>
    <property type="project" value="UniProtKB-KW"/>
</dbReference>
<dbReference type="GO" id="GO:0017178">
    <property type="term" value="F:diphthine-ammonia ligase activity"/>
    <property type="evidence" value="ECO:0000269"/>
    <property type="project" value="Reactome"/>
</dbReference>
<dbReference type="GO" id="GO:0017183">
    <property type="term" value="P:protein histidyl modification to diphthamide"/>
    <property type="evidence" value="ECO:0000318"/>
    <property type="project" value="GO_Central"/>
</dbReference>
<dbReference type="CDD" id="cd01994">
    <property type="entry name" value="AANH_PF0828-like"/>
    <property type="match status" value="1"/>
</dbReference>
<dbReference type="FunFam" id="3.90.1490.10:FF:000001">
    <property type="entry name" value="Diphthine--ammonia ligase"/>
    <property type="match status" value="1"/>
</dbReference>
<dbReference type="FunFam" id="3.40.50.620:FF:000069">
    <property type="entry name" value="diphthine--ammonia ligase"/>
    <property type="match status" value="1"/>
</dbReference>
<dbReference type="Gene3D" id="3.40.50.620">
    <property type="entry name" value="HUPs"/>
    <property type="match status" value="1"/>
</dbReference>
<dbReference type="Gene3D" id="3.90.1490.10">
    <property type="entry name" value="putative n-type atp pyrophosphatase, domain 2"/>
    <property type="match status" value="1"/>
</dbReference>
<dbReference type="InterPro" id="IPR002761">
    <property type="entry name" value="Diphthami_syn_dom"/>
</dbReference>
<dbReference type="InterPro" id="IPR030662">
    <property type="entry name" value="DPH6/MJ0570"/>
</dbReference>
<dbReference type="InterPro" id="IPR014729">
    <property type="entry name" value="Rossmann-like_a/b/a_fold"/>
</dbReference>
<dbReference type="NCBIfam" id="TIGR00290">
    <property type="entry name" value="MJ0570_dom"/>
    <property type="match status" value="1"/>
</dbReference>
<dbReference type="PANTHER" id="PTHR12196:SF2">
    <property type="entry name" value="DIPHTHINE--AMMONIA LIGASE"/>
    <property type="match status" value="1"/>
</dbReference>
<dbReference type="PANTHER" id="PTHR12196">
    <property type="entry name" value="DOMAIN OF UNKNOWN FUNCTION 71 DUF71 -CONTAINING PROTEIN"/>
    <property type="match status" value="1"/>
</dbReference>
<dbReference type="Pfam" id="PF01902">
    <property type="entry name" value="Diphthami_syn_2"/>
    <property type="match status" value="1"/>
</dbReference>
<dbReference type="PIRSF" id="PIRSF039123">
    <property type="entry name" value="Diphthamide_synthase"/>
    <property type="match status" value="1"/>
</dbReference>
<dbReference type="SUPFAM" id="SSF52402">
    <property type="entry name" value="Adenine nucleotide alpha hydrolases-like"/>
    <property type="match status" value="1"/>
</dbReference>
<proteinExistence type="evidence at protein level"/>
<comment type="function">
    <text evidence="1 3">Amidase that may catalyze the last step of diphthamide biosynthesis using ammonium and ATP (PubMed:23169644). Diphthamide biosynthesis consists in the conversion of an L-histidine residue in the translation elongation factor (EEF2) to diphthamide (By similarity).</text>
</comment>
<comment type="catalytic activity">
    <reaction evidence="6">
        <text>diphthine-[translation elongation factor 2] + NH4(+) + ATP = diphthamide-[translation elongation factor 2] + AMP + diphosphate + H(+)</text>
        <dbReference type="Rhea" id="RHEA:19753"/>
        <dbReference type="Rhea" id="RHEA-COMP:10172"/>
        <dbReference type="Rhea" id="RHEA-COMP:10174"/>
        <dbReference type="ChEBI" id="CHEBI:15378"/>
        <dbReference type="ChEBI" id="CHEBI:16692"/>
        <dbReference type="ChEBI" id="CHEBI:28938"/>
        <dbReference type="ChEBI" id="CHEBI:30616"/>
        <dbReference type="ChEBI" id="CHEBI:33019"/>
        <dbReference type="ChEBI" id="CHEBI:82696"/>
        <dbReference type="ChEBI" id="CHEBI:456215"/>
        <dbReference type="EC" id="6.3.1.14"/>
    </reaction>
</comment>
<comment type="pathway">
    <text>Protein modification; peptidyl-diphthamide biosynthesis.</text>
</comment>
<comment type="alternative products">
    <event type="alternative splicing"/>
    <isoform>
        <id>Q7L8W6-1</id>
        <name>1</name>
        <sequence type="displayed"/>
    </isoform>
    <isoform>
        <id>Q7L8W6-2</id>
        <name>2</name>
        <sequence type="described" ref="VSP_042933"/>
    </isoform>
</comment>
<comment type="miscellaneous">
    <text evidence="6">When transfected in S.cerevisiae, able to restore diphthamide biosynthesis in a strain lacking DPH6.</text>
</comment>
<comment type="similarity">
    <text evidence="5">Belongs to the Diphthine--ammonia ligase family.</text>
</comment>
<reference key="1">
    <citation type="journal article" date="2004" name="Nat. Genet.">
        <title>Complete sequencing and characterization of 21,243 full-length human cDNAs.</title>
        <authorList>
            <person name="Ota T."/>
            <person name="Suzuki Y."/>
            <person name="Nishikawa T."/>
            <person name="Otsuki T."/>
            <person name="Sugiyama T."/>
            <person name="Irie R."/>
            <person name="Wakamatsu A."/>
            <person name="Hayashi K."/>
            <person name="Sato H."/>
            <person name="Nagai K."/>
            <person name="Kimura K."/>
            <person name="Makita H."/>
            <person name="Sekine M."/>
            <person name="Obayashi M."/>
            <person name="Nishi T."/>
            <person name="Shibahara T."/>
            <person name="Tanaka T."/>
            <person name="Ishii S."/>
            <person name="Yamamoto J."/>
            <person name="Saito K."/>
            <person name="Kawai Y."/>
            <person name="Isono Y."/>
            <person name="Nakamura Y."/>
            <person name="Nagahari K."/>
            <person name="Murakami K."/>
            <person name="Yasuda T."/>
            <person name="Iwayanagi T."/>
            <person name="Wagatsuma M."/>
            <person name="Shiratori A."/>
            <person name="Sudo H."/>
            <person name="Hosoiri T."/>
            <person name="Kaku Y."/>
            <person name="Kodaira H."/>
            <person name="Kondo H."/>
            <person name="Sugawara M."/>
            <person name="Takahashi M."/>
            <person name="Kanda K."/>
            <person name="Yokoi T."/>
            <person name="Furuya T."/>
            <person name="Kikkawa E."/>
            <person name="Omura Y."/>
            <person name="Abe K."/>
            <person name="Kamihara K."/>
            <person name="Katsuta N."/>
            <person name="Sato K."/>
            <person name="Tanikawa M."/>
            <person name="Yamazaki M."/>
            <person name="Ninomiya K."/>
            <person name="Ishibashi T."/>
            <person name="Yamashita H."/>
            <person name="Murakawa K."/>
            <person name="Fujimori K."/>
            <person name="Tanai H."/>
            <person name="Kimata M."/>
            <person name="Watanabe M."/>
            <person name="Hiraoka S."/>
            <person name="Chiba Y."/>
            <person name="Ishida S."/>
            <person name="Ono Y."/>
            <person name="Takiguchi S."/>
            <person name="Watanabe S."/>
            <person name="Yosida M."/>
            <person name="Hotuta T."/>
            <person name="Kusano J."/>
            <person name="Kanehori K."/>
            <person name="Takahashi-Fujii A."/>
            <person name="Hara H."/>
            <person name="Tanase T.-O."/>
            <person name="Nomura Y."/>
            <person name="Togiya S."/>
            <person name="Komai F."/>
            <person name="Hara R."/>
            <person name="Takeuchi K."/>
            <person name="Arita M."/>
            <person name="Imose N."/>
            <person name="Musashino K."/>
            <person name="Yuuki H."/>
            <person name="Oshima A."/>
            <person name="Sasaki N."/>
            <person name="Aotsuka S."/>
            <person name="Yoshikawa Y."/>
            <person name="Matsunawa H."/>
            <person name="Ichihara T."/>
            <person name="Shiohata N."/>
            <person name="Sano S."/>
            <person name="Moriya S."/>
            <person name="Momiyama H."/>
            <person name="Satoh N."/>
            <person name="Takami S."/>
            <person name="Terashima Y."/>
            <person name="Suzuki O."/>
            <person name="Nakagawa S."/>
            <person name="Senoh A."/>
            <person name="Mizoguchi H."/>
            <person name="Goto Y."/>
            <person name="Shimizu F."/>
            <person name="Wakebe H."/>
            <person name="Hishigaki H."/>
            <person name="Watanabe T."/>
            <person name="Sugiyama A."/>
            <person name="Takemoto M."/>
            <person name="Kawakami B."/>
            <person name="Yamazaki M."/>
            <person name="Watanabe K."/>
            <person name="Kumagai A."/>
            <person name="Itakura S."/>
            <person name="Fukuzumi Y."/>
            <person name="Fujimori Y."/>
            <person name="Komiyama M."/>
            <person name="Tashiro H."/>
            <person name="Tanigami A."/>
            <person name="Fujiwara T."/>
            <person name="Ono T."/>
            <person name="Yamada K."/>
            <person name="Fujii Y."/>
            <person name="Ozaki K."/>
            <person name="Hirao M."/>
            <person name="Ohmori Y."/>
            <person name="Kawabata A."/>
            <person name="Hikiji T."/>
            <person name="Kobatake N."/>
            <person name="Inagaki H."/>
            <person name="Ikema Y."/>
            <person name="Okamoto S."/>
            <person name="Okitani R."/>
            <person name="Kawakami T."/>
            <person name="Noguchi S."/>
            <person name="Itoh T."/>
            <person name="Shigeta K."/>
            <person name="Senba T."/>
            <person name="Matsumura K."/>
            <person name="Nakajima Y."/>
            <person name="Mizuno T."/>
            <person name="Morinaga M."/>
            <person name="Sasaki M."/>
            <person name="Togashi T."/>
            <person name="Oyama M."/>
            <person name="Hata H."/>
            <person name="Watanabe M."/>
            <person name="Komatsu T."/>
            <person name="Mizushima-Sugano J."/>
            <person name="Satoh T."/>
            <person name="Shirai Y."/>
            <person name="Takahashi Y."/>
            <person name="Nakagawa K."/>
            <person name="Okumura K."/>
            <person name="Nagase T."/>
            <person name="Nomura N."/>
            <person name="Kikuchi H."/>
            <person name="Masuho Y."/>
            <person name="Yamashita R."/>
            <person name="Nakai K."/>
            <person name="Yada T."/>
            <person name="Nakamura Y."/>
            <person name="Ohara O."/>
            <person name="Isogai T."/>
            <person name="Sugano S."/>
        </authorList>
    </citation>
    <scope>NUCLEOTIDE SEQUENCE [LARGE SCALE MRNA] (ISOFORMS 1 AND 2)</scope>
    <source>
        <tissue>Thalamus</tissue>
        <tissue>Uterus</tissue>
    </source>
</reference>
<reference key="2">
    <citation type="journal article" date="2006" name="Nature">
        <title>Analysis of the DNA sequence and duplication history of human chromosome 15.</title>
        <authorList>
            <person name="Zody M.C."/>
            <person name="Garber M."/>
            <person name="Sharpe T."/>
            <person name="Young S.K."/>
            <person name="Rowen L."/>
            <person name="O'Neill K."/>
            <person name="Whittaker C.A."/>
            <person name="Kamal M."/>
            <person name="Chang J.L."/>
            <person name="Cuomo C.A."/>
            <person name="Dewar K."/>
            <person name="FitzGerald M.G."/>
            <person name="Kodira C.D."/>
            <person name="Madan A."/>
            <person name="Qin S."/>
            <person name="Yang X."/>
            <person name="Abbasi N."/>
            <person name="Abouelleil A."/>
            <person name="Arachchi H.M."/>
            <person name="Baradarani L."/>
            <person name="Birditt B."/>
            <person name="Bloom S."/>
            <person name="Bloom T."/>
            <person name="Borowsky M.L."/>
            <person name="Burke J."/>
            <person name="Butler J."/>
            <person name="Cook A."/>
            <person name="DeArellano K."/>
            <person name="DeCaprio D."/>
            <person name="Dorris L. III"/>
            <person name="Dors M."/>
            <person name="Eichler E.E."/>
            <person name="Engels R."/>
            <person name="Fahey J."/>
            <person name="Fleetwood P."/>
            <person name="Friedman C."/>
            <person name="Gearin G."/>
            <person name="Hall J.L."/>
            <person name="Hensley G."/>
            <person name="Johnson E."/>
            <person name="Jones C."/>
            <person name="Kamat A."/>
            <person name="Kaur A."/>
            <person name="Locke D.P."/>
            <person name="Madan A."/>
            <person name="Munson G."/>
            <person name="Jaffe D.B."/>
            <person name="Lui A."/>
            <person name="Macdonald P."/>
            <person name="Mauceli E."/>
            <person name="Naylor J.W."/>
            <person name="Nesbitt R."/>
            <person name="Nicol R."/>
            <person name="O'Leary S.B."/>
            <person name="Ratcliffe A."/>
            <person name="Rounsley S."/>
            <person name="She X."/>
            <person name="Sneddon K.M.B."/>
            <person name="Stewart S."/>
            <person name="Sougnez C."/>
            <person name="Stone S.M."/>
            <person name="Topham K."/>
            <person name="Vincent D."/>
            <person name="Wang S."/>
            <person name="Zimmer A.R."/>
            <person name="Birren B.W."/>
            <person name="Hood L."/>
            <person name="Lander E.S."/>
            <person name="Nusbaum C."/>
        </authorList>
    </citation>
    <scope>NUCLEOTIDE SEQUENCE [LARGE SCALE GENOMIC DNA]</scope>
</reference>
<reference key="3">
    <citation type="journal article" date="2004" name="Genome Res.">
        <title>The status, quality, and expansion of the NIH full-length cDNA project: the Mammalian Gene Collection (MGC).</title>
        <authorList>
            <consortium name="The MGC Project Team"/>
        </authorList>
    </citation>
    <scope>NUCLEOTIDE SEQUENCE [LARGE SCALE MRNA] (ISOFORM 1)</scope>
    <source>
        <tissue>Bone marrow</tissue>
        <tissue>Skin</tissue>
    </source>
</reference>
<reference key="4">
    <citation type="journal article" date="2011" name="BMC Syst. Biol.">
        <title>Initial characterization of the human central proteome.</title>
        <authorList>
            <person name="Burkard T.R."/>
            <person name="Planyavsky M."/>
            <person name="Kaupe I."/>
            <person name="Breitwieser F.P."/>
            <person name="Buerckstuemmer T."/>
            <person name="Bennett K.L."/>
            <person name="Superti-Furga G."/>
            <person name="Colinge J."/>
        </authorList>
    </citation>
    <scope>IDENTIFICATION BY MASS SPECTROMETRY [LARGE SCALE ANALYSIS]</scope>
</reference>
<reference key="5">
    <citation type="journal article" date="2012" name="Proc. Natl. Acad. Sci. U.S.A.">
        <title>Chemogenomic approach identified yeast YLR143W as diphthamide synthetase.</title>
        <authorList>
            <person name="Su X."/>
            <person name="Lin Z."/>
            <person name="Chen W."/>
            <person name="Jiang H."/>
            <person name="Zhang S."/>
            <person name="Lin H."/>
        </authorList>
    </citation>
    <scope>FUNCTION</scope>
    <scope>CATALYTIC ACTIVITY</scope>
</reference>
<gene>
    <name evidence="7" type="primary">DPH6</name>
    <name type="synonym">ATPBD4</name>
</gene>